<organism>
    <name type="scientific">Actinobacillus pleuropneumoniae serotype 5b (strain L20)</name>
    <dbReference type="NCBI Taxonomy" id="416269"/>
    <lineage>
        <taxon>Bacteria</taxon>
        <taxon>Pseudomonadati</taxon>
        <taxon>Pseudomonadota</taxon>
        <taxon>Gammaproteobacteria</taxon>
        <taxon>Pasteurellales</taxon>
        <taxon>Pasteurellaceae</taxon>
        <taxon>Actinobacillus</taxon>
    </lineage>
</organism>
<feature type="chain" id="PRO_1000069115" description="Proline--tRNA ligase">
    <location>
        <begin position="1"/>
        <end position="571"/>
    </location>
</feature>
<proteinExistence type="inferred from homology"/>
<protein>
    <recommendedName>
        <fullName evidence="1">Proline--tRNA ligase</fullName>
        <ecNumber evidence="1">6.1.1.15</ecNumber>
    </recommendedName>
    <alternativeName>
        <fullName evidence="1">Prolyl-tRNA synthetase</fullName>
        <shortName evidence="1">ProRS</shortName>
    </alternativeName>
</protein>
<gene>
    <name evidence="1" type="primary">proS</name>
    <name type="ordered locus">APL_1830</name>
</gene>
<sequence length="571" mass="63470">MRTSQYLFSTLKETPNDAQVVSHQLMLRAGMIRPMASGLYNWLPTGIKVLKKVENIIREEMNKGGAIEVLMPVVQPAELWQESGRWNDYGAELLRFVDRGSRDFVLGPTHEEVITDLVRREVSSYKQLPLNLYQIQTKFRDEVRPRFGVMRSREFVMKDAYSFHVDKASLQETYDVMYQVYSNIFTRLGLDFRAVQADTGSIGGSASHEFQVLASSGEDDVVFSTESDFAANIELAEAVAVGERQAPTAEMQLVDTPNAKTINELVEQFNLPIGKTVKTLIVKGATEEQPLVALVLRGDHELNEIKAQKHPLVADPLEFADEAEIKAKIGAGVGSLGVINLNVPAIIDRSVAVMSDFGCGANIDGKHYFNVNWERDAAMPEVADLRNVVEGDPSPDGKGVLQIKRGIEVGHIFQLGTKYSEAMKATVQGEDGKPLVMTMGCYGIGVTRVVAAAIEQHHDERGIIWPSDEIAPFTVAIVPMNMHKSESVQQFSEELYRTLKAQGVDVIFDDRKERPGVMFADMELIGVPHMVVIGEKNLANGEIEYKNRRTGEKQMIAKDQLLAFLKENVKA</sequence>
<keyword id="KW-0030">Aminoacyl-tRNA synthetase</keyword>
<keyword id="KW-0067">ATP-binding</keyword>
<keyword id="KW-0963">Cytoplasm</keyword>
<keyword id="KW-0436">Ligase</keyword>
<keyword id="KW-0547">Nucleotide-binding</keyword>
<keyword id="KW-0648">Protein biosynthesis</keyword>
<keyword id="KW-1185">Reference proteome</keyword>
<accession>A3N3C6</accession>
<dbReference type="EC" id="6.1.1.15" evidence="1"/>
<dbReference type="EMBL" id="CP000569">
    <property type="protein sequence ID" value="ABN74912.1"/>
    <property type="molecule type" value="Genomic_DNA"/>
</dbReference>
<dbReference type="RefSeq" id="WP_009875324.1">
    <property type="nucleotide sequence ID" value="NC_009053.1"/>
</dbReference>
<dbReference type="SMR" id="A3N3C6"/>
<dbReference type="STRING" id="416269.APL_1830"/>
<dbReference type="EnsemblBacteria" id="ABN74912">
    <property type="protein sequence ID" value="ABN74912"/>
    <property type="gene ID" value="APL_1830"/>
</dbReference>
<dbReference type="KEGG" id="apl:APL_1830"/>
<dbReference type="PATRIC" id="fig|416269.6.peg.1905"/>
<dbReference type="eggNOG" id="COG0442">
    <property type="taxonomic scope" value="Bacteria"/>
</dbReference>
<dbReference type="HOGENOM" id="CLU_016739_0_0_6"/>
<dbReference type="Proteomes" id="UP000001432">
    <property type="component" value="Chromosome"/>
</dbReference>
<dbReference type="GO" id="GO:0005829">
    <property type="term" value="C:cytosol"/>
    <property type="evidence" value="ECO:0007669"/>
    <property type="project" value="TreeGrafter"/>
</dbReference>
<dbReference type="GO" id="GO:0002161">
    <property type="term" value="F:aminoacyl-tRNA deacylase activity"/>
    <property type="evidence" value="ECO:0007669"/>
    <property type="project" value="InterPro"/>
</dbReference>
<dbReference type="GO" id="GO:0005524">
    <property type="term" value="F:ATP binding"/>
    <property type="evidence" value="ECO:0007669"/>
    <property type="project" value="UniProtKB-UniRule"/>
</dbReference>
<dbReference type="GO" id="GO:0004827">
    <property type="term" value="F:proline-tRNA ligase activity"/>
    <property type="evidence" value="ECO:0007669"/>
    <property type="project" value="UniProtKB-UniRule"/>
</dbReference>
<dbReference type="GO" id="GO:0006433">
    <property type="term" value="P:prolyl-tRNA aminoacylation"/>
    <property type="evidence" value="ECO:0007669"/>
    <property type="project" value="UniProtKB-UniRule"/>
</dbReference>
<dbReference type="CDD" id="cd04334">
    <property type="entry name" value="ProRS-INS"/>
    <property type="match status" value="1"/>
</dbReference>
<dbReference type="CDD" id="cd00861">
    <property type="entry name" value="ProRS_anticodon_short"/>
    <property type="match status" value="1"/>
</dbReference>
<dbReference type="CDD" id="cd00779">
    <property type="entry name" value="ProRS_core_prok"/>
    <property type="match status" value="1"/>
</dbReference>
<dbReference type="FunFam" id="3.30.930.10:FF:000043">
    <property type="entry name" value="Proline--tRNA ligase"/>
    <property type="match status" value="1"/>
</dbReference>
<dbReference type="FunFam" id="3.30.930.10:FF:000097">
    <property type="entry name" value="Proline--tRNA ligase"/>
    <property type="match status" value="1"/>
</dbReference>
<dbReference type="FunFam" id="3.40.50.800:FF:000006">
    <property type="entry name" value="Proline--tRNA ligase"/>
    <property type="match status" value="1"/>
</dbReference>
<dbReference type="FunFam" id="3.90.960.10:FF:000001">
    <property type="entry name" value="Proline--tRNA ligase"/>
    <property type="match status" value="1"/>
</dbReference>
<dbReference type="Gene3D" id="3.40.50.800">
    <property type="entry name" value="Anticodon-binding domain"/>
    <property type="match status" value="1"/>
</dbReference>
<dbReference type="Gene3D" id="3.30.930.10">
    <property type="entry name" value="Bira Bifunctional Protein, Domain 2"/>
    <property type="match status" value="2"/>
</dbReference>
<dbReference type="HAMAP" id="MF_01569">
    <property type="entry name" value="Pro_tRNA_synth_type1"/>
    <property type="match status" value="1"/>
</dbReference>
<dbReference type="InterPro" id="IPR002314">
    <property type="entry name" value="aa-tRNA-synt_IIb"/>
</dbReference>
<dbReference type="InterPro" id="IPR006195">
    <property type="entry name" value="aa-tRNA-synth_II"/>
</dbReference>
<dbReference type="InterPro" id="IPR045864">
    <property type="entry name" value="aa-tRNA-synth_II/BPL/LPL"/>
</dbReference>
<dbReference type="InterPro" id="IPR004154">
    <property type="entry name" value="Anticodon-bd"/>
</dbReference>
<dbReference type="InterPro" id="IPR036621">
    <property type="entry name" value="Anticodon-bd_dom_sf"/>
</dbReference>
<dbReference type="InterPro" id="IPR002316">
    <property type="entry name" value="Pro-tRNA-ligase_IIa"/>
</dbReference>
<dbReference type="InterPro" id="IPR004500">
    <property type="entry name" value="Pro-tRNA-synth_IIa_bac-type"/>
</dbReference>
<dbReference type="InterPro" id="IPR023717">
    <property type="entry name" value="Pro-tRNA-Synthase_IIa_type1"/>
</dbReference>
<dbReference type="InterPro" id="IPR050062">
    <property type="entry name" value="Pro-tRNA_synthetase"/>
</dbReference>
<dbReference type="InterPro" id="IPR044140">
    <property type="entry name" value="ProRS_anticodon_short"/>
</dbReference>
<dbReference type="InterPro" id="IPR033730">
    <property type="entry name" value="ProRS_core_prok"/>
</dbReference>
<dbReference type="InterPro" id="IPR036754">
    <property type="entry name" value="YbaK/aa-tRNA-synt-asso_dom_sf"/>
</dbReference>
<dbReference type="InterPro" id="IPR007214">
    <property type="entry name" value="YbaK/aa-tRNA-synth-assoc-dom"/>
</dbReference>
<dbReference type="NCBIfam" id="NF006625">
    <property type="entry name" value="PRK09194.1"/>
    <property type="match status" value="1"/>
</dbReference>
<dbReference type="NCBIfam" id="TIGR00409">
    <property type="entry name" value="proS_fam_II"/>
    <property type="match status" value="1"/>
</dbReference>
<dbReference type="PANTHER" id="PTHR42753">
    <property type="entry name" value="MITOCHONDRIAL RIBOSOME PROTEIN L39/PROLYL-TRNA LIGASE FAMILY MEMBER"/>
    <property type="match status" value="1"/>
</dbReference>
<dbReference type="PANTHER" id="PTHR42753:SF2">
    <property type="entry name" value="PROLINE--TRNA LIGASE"/>
    <property type="match status" value="1"/>
</dbReference>
<dbReference type="Pfam" id="PF03129">
    <property type="entry name" value="HGTP_anticodon"/>
    <property type="match status" value="1"/>
</dbReference>
<dbReference type="Pfam" id="PF00587">
    <property type="entry name" value="tRNA-synt_2b"/>
    <property type="match status" value="1"/>
</dbReference>
<dbReference type="Pfam" id="PF04073">
    <property type="entry name" value="tRNA_edit"/>
    <property type="match status" value="1"/>
</dbReference>
<dbReference type="PIRSF" id="PIRSF001535">
    <property type="entry name" value="ProRS_1"/>
    <property type="match status" value="1"/>
</dbReference>
<dbReference type="PRINTS" id="PR01046">
    <property type="entry name" value="TRNASYNTHPRO"/>
</dbReference>
<dbReference type="SUPFAM" id="SSF52954">
    <property type="entry name" value="Class II aaRS ABD-related"/>
    <property type="match status" value="1"/>
</dbReference>
<dbReference type="SUPFAM" id="SSF55681">
    <property type="entry name" value="Class II aaRS and biotin synthetases"/>
    <property type="match status" value="1"/>
</dbReference>
<dbReference type="SUPFAM" id="SSF55826">
    <property type="entry name" value="YbaK/ProRS associated domain"/>
    <property type="match status" value="1"/>
</dbReference>
<dbReference type="PROSITE" id="PS50862">
    <property type="entry name" value="AA_TRNA_LIGASE_II"/>
    <property type="match status" value="1"/>
</dbReference>
<reference key="1">
    <citation type="journal article" date="2008" name="J. Bacteriol.">
        <title>The complete genome sequence of Actinobacillus pleuropneumoniae L20 (serotype 5b).</title>
        <authorList>
            <person name="Foote S.J."/>
            <person name="Bosse J.T."/>
            <person name="Bouevitch A.B."/>
            <person name="Langford P.R."/>
            <person name="Young N.M."/>
            <person name="Nash J.H.E."/>
        </authorList>
    </citation>
    <scope>NUCLEOTIDE SEQUENCE [LARGE SCALE GENOMIC DNA]</scope>
    <source>
        <strain>L20</strain>
    </source>
</reference>
<evidence type="ECO:0000255" key="1">
    <source>
        <dbReference type="HAMAP-Rule" id="MF_01569"/>
    </source>
</evidence>
<name>SYP_ACTP2</name>
<comment type="function">
    <text evidence="1">Catalyzes the attachment of proline to tRNA(Pro) in a two-step reaction: proline is first activated by ATP to form Pro-AMP and then transferred to the acceptor end of tRNA(Pro). As ProRS can inadvertently accommodate and process non-cognate amino acids such as alanine and cysteine, to avoid such errors it has two additional distinct editing activities against alanine. One activity is designated as 'pretransfer' editing and involves the tRNA(Pro)-independent hydrolysis of activated Ala-AMP. The other activity is designated 'posttransfer' editing and involves deacylation of mischarged Ala-tRNA(Pro). The misacylated Cys-tRNA(Pro) is not edited by ProRS.</text>
</comment>
<comment type="catalytic activity">
    <reaction evidence="1">
        <text>tRNA(Pro) + L-proline + ATP = L-prolyl-tRNA(Pro) + AMP + diphosphate</text>
        <dbReference type="Rhea" id="RHEA:14305"/>
        <dbReference type="Rhea" id="RHEA-COMP:9700"/>
        <dbReference type="Rhea" id="RHEA-COMP:9702"/>
        <dbReference type="ChEBI" id="CHEBI:30616"/>
        <dbReference type="ChEBI" id="CHEBI:33019"/>
        <dbReference type="ChEBI" id="CHEBI:60039"/>
        <dbReference type="ChEBI" id="CHEBI:78442"/>
        <dbReference type="ChEBI" id="CHEBI:78532"/>
        <dbReference type="ChEBI" id="CHEBI:456215"/>
        <dbReference type="EC" id="6.1.1.15"/>
    </reaction>
</comment>
<comment type="subunit">
    <text evidence="1">Homodimer.</text>
</comment>
<comment type="subcellular location">
    <subcellularLocation>
        <location evidence="1">Cytoplasm</location>
    </subcellularLocation>
</comment>
<comment type="domain">
    <text evidence="1">Consists of three domains: the N-terminal catalytic domain, the editing domain and the C-terminal anticodon-binding domain.</text>
</comment>
<comment type="similarity">
    <text evidence="1">Belongs to the class-II aminoacyl-tRNA synthetase family. ProS type 1 subfamily.</text>
</comment>